<proteinExistence type="inferred from homology"/>
<feature type="chain" id="PRO_0000184406" description="L-aspartate oxidase">
    <location>
        <begin position="1"/>
        <end position="533"/>
    </location>
</feature>
<feature type="active site" description="Proton donor/acceptor" evidence="1">
    <location>
        <position position="290"/>
    </location>
</feature>
<feature type="binding site" evidence="1">
    <location>
        <begin position="16"/>
        <end position="19"/>
    </location>
    <ligand>
        <name>FAD</name>
        <dbReference type="ChEBI" id="CHEBI:57692"/>
    </ligand>
</feature>
<feature type="binding site" evidence="1">
    <location>
        <position position="38"/>
    </location>
    <ligand>
        <name>FAD</name>
        <dbReference type="ChEBI" id="CHEBI:57692"/>
    </ligand>
</feature>
<feature type="binding site" evidence="1">
    <location>
        <begin position="45"/>
        <end position="52"/>
    </location>
    <ligand>
        <name>FAD</name>
        <dbReference type="ChEBI" id="CHEBI:57692"/>
    </ligand>
</feature>
<feature type="binding site" evidence="1">
    <location>
        <position position="223"/>
    </location>
    <ligand>
        <name>FAD</name>
        <dbReference type="ChEBI" id="CHEBI:57692"/>
    </ligand>
</feature>
<feature type="binding site" evidence="1">
    <location>
        <position position="375"/>
    </location>
    <ligand>
        <name>FAD</name>
        <dbReference type="ChEBI" id="CHEBI:57692"/>
    </ligand>
</feature>
<feature type="binding site" evidence="1">
    <location>
        <begin position="391"/>
        <end position="392"/>
    </location>
    <ligand>
        <name>FAD</name>
        <dbReference type="ChEBI" id="CHEBI:57692"/>
    </ligand>
</feature>
<feature type="site" description="Important in orienting the L-aspartate substrate" evidence="1">
    <location>
        <position position="121"/>
    </location>
</feature>
<sequence length="533" mass="59294">MQSSSEHISDVLIIGSGAAGLSLALRLAPHCKVTVLSKGPLNEGATFYAQGGIAAVFDETDSISSHVDDTLIAGAGLCDKEAVEFIASNARSCVQWLIDQGVLFDTETSANGEERYHLTREGGHSHRRILHTADATGKEVETTLVGKASNHPNISVKERCNAVDLITSNKIGLAGTKRVVGAYVWNRELEKVETFRAKAVVLATGGAAKVYQYTTNPDISSGDGIAMAWRAGCRVANLEFNQFHPTCLFHPQARNFLLTEALRGEGAYLKRPDGSRFMLDFDPRGELAPRDIVARAIDHEMKRLGADCMYLDISHKPTDFVMQHFPMIYEKLLSLGIDLTKEAIPIVPAAHYTCGGVMVDQHGRTDLDGLYAIGEVSYTGLHGANRMASNSLLECLVYGWSAAEDILTRLPTAKLAKHLPDWDESRVDNSDERVVIQHNWHELRLFMWDYVGIVRTTKRLERALRRINTLQQEIDEYYANFRISNNLLELRNLVQVAELIVRCAMERKESRGLHYTLDYPDQIENPQPTILHP</sequence>
<protein>
    <recommendedName>
        <fullName evidence="1">L-aspartate oxidase</fullName>
        <shortName evidence="1">LASPO</shortName>
        <ecNumber evidence="1">1.4.3.16</ecNumber>
    </recommendedName>
    <alternativeName>
        <fullName>Quinolinate synthase B</fullName>
    </alternativeName>
</protein>
<gene>
    <name type="primary">nadB</name>
    <name type="ordered locus">YPO2710</name>
    <name type="ordered locus">y1289</name>
    <name type="ordered locus">YP_2514</name>
</gene>
<dbReference type="EC" id="1.4.3.16" evidence="1"/>
<dbReference type="EMBL" id="AL590842">
    <property type="protein sequence ID" value="CAL21329.1"/>
    <property type="status" value="ALT_INIT"/>
    <property type="molecule type" value="Genomic_DNA"/>
</dbReference>
<dbReference type="EMBL" id="AE009952">
    <property type="protein sequence ID" value="AAM84863.1"/>
    <property type="status" value="ALT_INIT"/>
    <property type="molecule type" value="Genomic_DNA"/>
</dbReference>
<dbReference type="EMBL" id="AE017042">
    <property type="protein sequence ID" value="AAS62712.1"/>
    <property type="status" value="ALT_INIT"/>
    <property type="molecule type" value="Genomic_DNA"/>
</dbReference>
<dbReference type="PIR" id="AF0330">
    <property type="entry name" value="AF0330"/>
</dbReference>
<dbReference type="RefSeq" id="YP_002347657.1">
    <property type="nucleotide sequence ID" value="NC_003143.1"/>
</dbReference>
<dbReference type="SMR" id="Q8ZD80"/>
<dbReference type="STRING" id="214092.YPO2710"/>
<dbReference type="PaxDb" id="214092-YPO2710"/>
<dbReference type="DNASU" id="1146236"/>
<dbReference type="EnsemblBacteria" id="AAS62712">
    <property type="protein sequence ID" value="AAS62712"/>
    <property type="gene ID" value="YP_2514"/>
</dbReference>
<dbReference type="KEGG" id="ype:YPO2710"/>
<dbReference type="KEGG" id="ypj:CH55_1456"/>
<dbReference type="KEGG" id="ypk:y1289"/>
<dbReference type="KEGG" id="ypl:CH46_2394"/>
<dbReference type="KEGG" id="ypm:YP_2514"/>
<dbReference type="KEGG" id="ypv:BZ15_818"/>
<dbReference type="KEGG" id="ypw:CH59_3595"/>
<dbReference type="PATRIC" id="fig|214092.21.peg.3151"/>
<dbReference type="eggNOG" id="COG0029">
    <property type="taxonomic scope" value="Bacteria"/>
</dbReference>
<dbReference type="HOGENOM" id="CLU_014312_3_0_6"/>
<dbReference type="UniPathway" id="UPA00253">
    <property type="reaction ID" value="UER00326"/>
</dbReference>
<dbReference type="Proteomes" id="UP000000815">
    <property type="component" value="Chromosome"/>
</dbReference>
<dbReference type="Proteomes" id="UP000001019">
    <property type="component" value="Chromosome"/>
</dbReference>
<dbReference type="Proteomes" id="UP000002490">
    <property type="component" value="Chromosome"/>
</dbReference>
<dbReference type="GO" id="GO:0005737">
    <property type="term" value="C:cytoplasm"/>
    <property type="evidence" value="ECO:0007669"/>
    <property type="project" value="UniProtKB-SubCell"/>
</dbReference>
<dbReference type="GO" id="GO:0008734">
    <property type="term" value="F:L-aspartate oxidase activity"/>
    <property type="evidence" value="ECO:0000318"/>
    <property type="project" value="GO_Central"/>
</dbReference>
<dbReference type="GO" id="GO:0000166">
    <property type="term" value="F:nucleotide binding"/>
    <property type="evidence" value="ECO:0007669"/>
    <property type="project" value="UniProtKB-KW"/>
</dbReference>
<dbReference type="GO" id="GO:0034628">
    <property type="term" value="P:'de novo' NAD biosynthetic process from L-aspartate"/>
    <property type="evidence" value="ECO:0000318"/>
    <property type="project" value="GO_Central"/>
</dbReference>
<dbReference type="FunFam" id="1.20.58.100:FF:000002">
    <property type="entry name" value="L-aspartate oxidase"/>
    <property type="match status" value="1"/>
</dbReference>
<dbReference type="FunFam" id="3.50.50.60:FF:000060">
    <property type="entry name" value="L-aspartate oxidase"/>
    <property type="match status" value="1"/>
</dbReference>
<dbReference type="FunFam" id="3.90.700.10:FF:000002">
    <property type="entry name" value="L-aspartate oxidase"/>
    <property type="match status" value="1"/>
</dbReference>
<dbReference type="Gene3D" id="3.50.50.60">
    <property type="entry name" value="FAD/NAD(P)-binding domain"/>
    <property type="match status" value="1"/>
</dbReference>
<dbReference type="Gene3D" id="1.20.58.100">
    <property type="entry name" value="Fumarate reductase/succinate dehydrogenase flavoprotein-like, C-terminal domain"/>
    <property type="match status" value="1"/>
</dbReference>
<dbReference type="Gene3D" id="3.90.700.10">
    <property type="entry name" value="Succinate dehydrogenase/fumarate reductase flavoprotein, catalytic domain"/>
    <property type="match status" value="1"/>
</dbReference>
<dbReference type="InterPro" id="IPR003953">
    <property type="entry name" value="FAD-dep_OxRdtase_2_FAD-bd"/>
</dbReference>
<dbReference type="InterPro" id="IPR036188">
    <property type="entry name" value="FAD/NAD-bd_sf"/>
</dbReference>
<dbReference type="InterPro" id="IPR037099">
    <property type="entry name" value="Fum_R/Succ_DH_flav-like_C_sf"/>
</dbReference>
<dbReference type="InterPro" id="IPR015939">
    <property type="entry name" value="Fum_Rdtase/Succ_DH_flav-like_C"/>
</dbReference>
<dbReference type="InterPro" id="IPR005288">
    <property type="entry name" value="NadB"/>
</dbReference>
<dbReference type="InterPro" id="IPR027477">
    <property type="entry name" value="Succ_DH/fumarate_Rdtase_cat_sf"/>
</dbReference>
<dbReference type="NCBIfam" id="TIGR00551">
    <property type="entry name" value="nadB"/>
    <property type="match status" value="1"/>
</dbReference>
<dbReference type="NCBIfam" id="NF006567">
    <property type="entry name" value="PRK09077.1"/>
    <property type="match status" value="1"/>
</dbReference>
<dbReference type="PANTHER" id="PTHR42716">
    <property type="entry name" value="L-ASPARTATE OXIDASE"/>
    <property type="match status" value="1"/>
</dbReference>
<dbReference type="PANTHER" id="PTHR42716:SF2">
    <property type="entry name" value="L-ASPARTATE OXIDASE, CHLOROPLASTIC"/>
    <property type="match status" value="1"/>
</dbReference>
<dbReference type="Pfam" id="PF00890">
    <property type="entry name" value="FAD_binding_2"/>
    <property type="match status" value="1"/>
</dbReference>
<dbReference type="Pfam" id="PF02910">
    <property type="entry name" value="Succ_DH_flav_C"/>
    <property type="match status" value="1"/>
</dbReference>
<dbReference type="PIRSF" id="PIRSF000171">
    <property type="entry name" value="SDHA_APRA_LASPO"/>
    <property type="match status" value="1"/>
</dbReference>
<dbReference type="PRINTS" id="PR00368">
    <property type="entry name" value="FADPNR"/>
</dbReference>
<dbReference type="SUPFAM" id="SSF51905">
    <property type="entry name" value="FAD/NAD(P)-binding domain"/>
    <property type="match status" value="1"/>
</dbReference>
<dbReference type="SUPFAM" id="SSF46977">
    <property type="entry name" value="Succinate dehydrogenase/fumarate reductase flavoprotein C-terminal domain"/>
    <property type="match status" value="1"/>
</dbReference>
<dbReference type="SUPFAM" id="SSF56425">
    <property type="entry name" value="Succinate dehydrogenase/fumarate reductase flavoprotein, catalytic domain"/>
    <property type="match status" value="1"/>
</dbReference>
<comment type="function">
    <text evidence="1">Catalyzes the oxidation of L-aspartate to iminoaspartate, the first step in the de novo biosynthesis of NAD(+).</text>
</comment>
<comment type="catalytic activity">
    <reaction evidence="1">
        <text>L-aspartate + O2 = iminosuccinate + H2O2</text>
        <dbReference type="Rhea" id="RHEA:25876"/>
        <dbReference type="ChEBI" id="CHEBI:15379"/>
        <dbReference type="ChEBI" id="CHEBI:16240"/>
        <dbReference type="ChEBI" id="CHEBI:29991"/>
        <dbReference type="ChEBI" id="CHEBI:77875"/>
        <dbReference type="EC" id="1.4.3.16"/>
    </reaction>
    <physiologicalReaction direction="left-to-right" evidence="1">
        <dbReference type="Rhea" id="RHEA:25877"/>
    </physiologicalReaction>
</comment>
<comment type="cofactor">
    <cofactor evidence="1">
        <name>FAD</name>
        <dbReference type="ChEBI" id="CHEBI:57692"/>
    </cofactor>
    <text evidence="1">Binds 1 FAD per subunit.</text>
</comment>
<comment type="pathway">
    <text evidence="1">Cofactor biosynthesis; NAD(+) biosynthesis; iminoaspartate from L-aspartate (oxidase route): step 1/1.</text>
</comment>
<comment type="subcellular location">
    <subcellularLocation>
        <location evidence="1">Cytoplasm</location>
    </subcellularLocation>
</comment>
<comment type="similarity">
    <text evidence="2">Belongs to the FAD-dependent oxidoreductase 2 family. NadB subfamily.</text>
</comment>
<comment type="sequence caution" evidence="2">
    <conflict type="erroneous initiation">
        <sequence resource="EMBL-CDS" id="AAM84863"/>
    </conflict>
</comment>
<comment type="sequence caution" evidence="2">
    <conflict type="erroneous initiation">
        <sequence resource="EMBL-CDS" id="AAS62712"/>
    </conflict>
</comment>
<comment type="sequence caution" evidence="2">
    <conflict type="erroneous initiation">
        <sequence resource="EMBL-CDS" id="CAL21329"/>
    </conflict>
</comment>
<evidence type="ECO:0000250" key="1">
    <source>
        <dbReference type="UniProtKB" id="P10902"/>
    </source>
</evidence>
<evidence type="ECO:0000305" key="2"/>
<name>NADB_YERPE</name>
<reference key="1">
    <citation type="journal article" date="2001" name="Nature">
        <title>Genome sequence of Yersinia pestis, the causative agent of plague.</title>
        <authorList>
            <person name="Parkhill J."/>
            <person name="Wren B.W."/>
            <person name="Thomson N.R."/>
            <person name="Titball R.W."/>
            <person name="Holden M.T.G."/>
            <person name="Prentice M.B."/>
            <person name="Sebaihia M."/>
            <person name="James K.D."/>
            <person name="Churcher C.M."/>
            <person name="Mungall K.L."/>
            <person name="Baker S."/>
            <person name="Basham D."/>
            <person name="Bentley S.D."/>
            <person name="Brooks K."/>
            <person name="Cerdeno-Tarraga A.-M."/>
            <person name="Chillingworth T."/>
            <person name="Cronin A."/>
            <person name="Davies R.M."/>
            <person name="Davis P."/>
            <person name="Dougan G."/>
            <person name="Feltwell T."/>
            <person name="Hamlin N."/>
            <person name="Holroyd S."/>
            <person name="Jagels K."/>
            <person name="Karlyshev A.V."/>
            <person name="Leather S."/>
            <person name="Moule S."/>
            <person name="Oyston P.C.F."/>
            <person name="Quail M.A."/>
            <person name="Rutherford K.M."/>
            <person name="Simmonds M."/>
            <person name="Skelton J."/>
            <person name="Stevens K."/>
            <person name="Whitehead S."/>
            <person name="Barrell B.G."/>
        </authorList>
    </citation>
    <scope>NUCLEOTIDE SEQUENCE [LARGE SCALE GENOMIC DNA]</scope>
    <source>
        <strain>CO-92 / Biovar Orientalis</strain>
    </source>
</reference>
<reference key="2">
    <citation type="journal article" date="2002" name="J. Bacteriol.">
        <title>Genome sequence of Yersinia pestis KIM.</title>
        <authorList>
            <person name="Deng W."/>
            <person name="Burland V."/>
            <person name="Plunkett G. III"/>
            <person name="Boutin A."/>
            <person name="Mayhew G.F."/>
            <person name="Liss P."/>
            <person name="Perna N.T."/>
            <person name="Rose D.J."/>
            <person name="Mau B."/>
            <person name="Zhou S."/>
            <person name="Schwartz D.C."/>
            <person name="Fetherston J.D."/>
            <person name="Lindler L.E."/>
            <person name="Brubaker R.R."/>
            <person name="Plano G.V."/>
            <person name="Straley S.C."/>
            <person name="McDonough K.A."/>
            <person name="Nilles M.L."/>
            <person name="Matson J.S."/>
            <person name="Blattner F.R."/>
            <person name="Perry R.D."/>
        </authorList>
    </citation>
    <scope>NUCLEOTIDE SEQUENCE [LARGE SCALE GENOMIC DNA]</scope>
    <source>
        <strain>KIM10+ / Biovar Mediaevalis</strain>
    </source>
</reference>
<reference key="3">
    <citation type="journal article" date="2004" name="DNA Res.">
        <title>Complete genome sequence of Yersinia pestis strain 91001, an isolate avirulent to humans.</title>
        <authorList>
            <person name="Song Y."/>
            <person name="Tong Z."/>
            <person name="Wang J."/>
            <person name="Wang L."/>
            <person name="Guo Z."/>
            <person name="Han Y."/>
            <person name="Zhang J."/>
            <person name="Pei D."/>
            <person name="Zhou D."/>
            <person name="Qin H."/>
            <person name="Pang X."/>
            <person name="Han Y."/>
            <person name="Zhai J."/>
            <person name="Li M."/>
            <person name="Cui B."/>
            <person name="Qi Z."/>
            <person name="Jin L."/>
            <person name="Dai R."/>
            <person name="Chen F."/>
            <person name="Li S."/>
            <person name="Ye C."/>
            <person name="Du Z."/>
            <person name="Lin W."/>
            <person name="Wang J."/>
            <person name="Yu J."/>
            <person name="Yang H."/>
            <person name="Wang J."/>
            <person name="Huang P."/>
            <person name="Yang R."/>
        </authorList>
    </citation>
    <scope>NUCLEOTIDE SEQUENCE [LARGE SCALE GENOMIC DNA]</scope>
    <source>
        <strain>91001 / Biovar Mediaevalis</strain>
    </source>
</reference>
<accession>Q8ZD80</accession>
<accession>Q0WDI1</accession>
<keyword id="KW-0963">Cytoplasm</keyword>
<keyword id="KW-0274">FAD</keyword>
<keyword id="KW-0285">Flavoprotein</keyword>
<keyword id="KW-0547">Nucleotide-binding</keyword>
<keyword id="KW-0560">Oxidoreductase</keyword>
<keyword id="KW-0662">Pyridine nucleotide biosynthesis</keyword>
<keyword id="KW-1185">Reference proteome</keyword>
<organism>
    <name type="scientific">Yersinia pestis</name>
    <dbReference type="NCBI Taxonomy" id="632"/>
    <lineage>
        <taxon>Bacteria</taxon>
        <taxon>Pseudomonadati</taxon>
        <taxon>Pseudomonadota</taxon>
        <taxon>Gammaproteobacteria</taxon>
        <taxon>Enterobacterales</taxon>
        <taxon>Yersiniaceae</taxon>
        <taxon>Yersinia</taxon>
    </lineage>
</organism>